<protein>
    <recommendedName>
        <fullName>UPF0299 membrane protein YohJ</fullName>
    </recommendedName>
</protein>
<reference key="1">
    <citation type="journal article" date="2002" name="Nucleic Acids Res.">
        <title>Genome sequence of Shigella flexneri 2a: insights into pathogenicity through comparison with genomes of Escherichia coli K12 and O157.</title>
        <authorList>
            <person name="Jin Q."/>
            <person name="Yuan Z."/>
            <person name="Xu J."/>
            <person name="Wang Y."/>
            <person name="Shen Y."/>
            <person name="Lu W."/>
            <person name="Wang J."/>
            <person name="Liu H."/>
            <person name="Yang J."/>
            <person name="Yang F."/>
            <person name="Zhang X."/>
            <person name="Zhang J."/>
            <person name="Yang G."/>
            <person name="Wu H."/>
            <person name="Qu D."/>
            <person name="Dong J."/>
            <person name="Sun L."/>
            <person name="Xue Y."/>
            <person name="Zhao A."/>
            <person name="Gao Y."/>
            <person name="Zhu J."/>
            <person name="Kan B."/>
            <person name="Ding K."/>
            <person name="Chen S."/>
            <person name="Cheng H."/>
            <person name="Yao Z."/>
            <person name="He B."/>
            <person name="Chen R."/>
            <person name="Ma D."/>
            <person name="Qiang B."/>
            <person name="Wen Y."/>
            <person name="Hou Y."/>
            <person name="Yu J."/>
        </authorList>
    </citation>
    <scope>NUCLEOTIDE SEQUENCE [LARGE SCALE GENOMIC DNA]</scope>
    <source>
        <strain>301 / Serotype 2a</strain>
    </source>
</reference>
<reference key="2">
    <citation type="journal article" date="2003" name="Infect. Immun.">
        <title>Complete genome sequence and comparative genomics of Shigella flexneri serotype 2a strain 2457T.</title>
        <authorList>
            <person name="Wei J."/>
            <person name="Goldberg M.B."/>
            <person name="Burland V."/>
            <person name="Venkatesan M.M."/>
            <person name="Deng W."/>
            <person name="Fournier G."/>
            <person name="Mayhew G.F."/>
            <person name="Plunkett G. III"/>
            <person name="Rose D.J."/>
            <person name="Darling A."/>
            <person name="Mau B."/>
            <person name="Perna N.T."/>
            <person name="Payne S.M."/>
            <person name="Runyen-Janecky L.J."/>
            <person name="Zhou S."/>
            <person name="Schwartz D.C."/>
            <person name="Blattner F.R."/>
        </authorList>
    </citation>
    <scope>NUCLEOTIDE SEQUENCE [LARGE SCALE GENOMIC DNA]</scope>
    <source>
        <strain>ATCC 700930 / 2457T / Serotype 2a</strain>
    </source>
</reference>
<feature type="chain" id="PRO_0000072814" description="UPF0299 membrane protein YohJ">
    <location>
        <begin position="1"/>
        <end position="132"/>
    </location>
</feature>
<feature type="topological domain" description="Periplasmic" evidence="2">
    <location>
        <begin position="1"/>
        <end position="6"/>
    </location>
</feature>
<feature type="transmembrane region" description="Helical" evidence="2">
    <location>
        <begin position="7"/>
        <end position="27"/>
    </location>
</feature>
<feature type="topological domain" description="Cytoplasmic" evidence="2">
    <location>
        <begin position="28"/>
        <end position="30"/>
    </location>
</feature>
<feature type="transmembrane region" description="Helical" evidence="2">
    <location>
        <begin position="31"/>
        <end position="51"/>
    </location>
</feature>
<feature type="topological domain" description="Periplasmic" evidence="2">
    <location>
        <begin position="52"/>
        <end position="62"/>
    </location>
</feature>
<feature type="transmembrane region" description="Helical" evidence="2">
    <location>
        <begin position="63"/>
        <end position="83"/>
    </location>
</feature>
<feature type="topological domain" description="Cytoplasmic" evidence="2">
    <location>
        <begin position="84"/>
        <end position="92"/>
    </location>
</feature>
<feature type="transmembrane region" description="Helical" evidence="2">
    <location>
        <begin position="93"/>
        <end position="113"/>
    </location>
</feature>
<feature type="topological domain" description="Periplasmic" evidence="2">
    <location>
        <begin position="114"/>
        <end position="132"/>
    </location>
</feature>
<name>YOHJ_SHIFL</name>
<evidence type="ECO:0000250" key="1"/>
<evidence type="ECO:0000255" key="2"/>
<evidence type="ECO:0000305" key="3"/>
<comment type="subcellular location">
    <subcellularLocation>
        <location evidence="1">Cell inner membrane</location>
        <topology evidence="1">Multi-pass membrane protein</topology>
    </subcellularLocation>
</comment>
<comment type="similarity">
    <text evidence="3">Belongs to the UPF0299 family.</text>
</comment>
<keyword id="KW-0997">Cell inner membrane</keyword>
<keyword id="KW-1003">Cell membrane</keyword>
<keyword id="KW-0472">Membrane</keyword>
<keyword id="KW-1185">Reference proteome</keyword>
<keyword id="KW-0812">Transmembrane</keyword>
<keyword id="KW-1133">Transmembrane helix</keyword>
<sequence>MSKTLNIIWQYLRAFVLIYACLYAGIFIASLLPVTIPGSIIGMLILFVLLALQILPAKWVNPGCYVLIRYMALLFVPIGVGVMQYFDLLRAQFGPVVVSCAVSTLVVFLVVSWSSQLVHGERKVVGQKGSEE</sequence>
<proteinExistence type="inferred from homology"/>
<gene>
    <name type="primary">yohJ</name>
    <name type="ordered locus">SF2226</name>
    <name type="ordered locus">S2355</name>
</gene>
<accession>P60634</accession>
<accession>P33372</accession>
<dbReference type="EMBL" id="AE005674">
    <property type="protein sequence ID" value="AAN43748.2"/>
    <property type="molecule type" value="Genomic_DNA"/>
</dbReference>
<dbReference type="EMBL" id="AE014073">
    <property type="protein sequence ID" value="AAP17565.1"/>
    <property type="molecule type" value="Genomic_DNA"/>
</dbReference>
<dbReference type="RefSeq" id="NP_708041.2">
    <property type="nucleotide sequence ID" value="NC_004337.2"/>
</dbReference>
<dbReference type="RefSeq" id="WP_001295452.1">
    <property type="nucleotide sequence ID" value="NZ_WPGW01000017.1"/>
</dbReference>
<dbReference type="SMR" id="P60634"/>
<dbReference type="STRING" id="198214.SF2226"/>
<dbReference type="PaxDb" id="198214-SF2226"/>
<dbReference type="GeneID" id="1025425"/>
<dbReference type="KEGG" id="sfl:SF2226"/>
<dbReference type="KEGG" id="sfx:S2355"/>
<dbReference type="PATRIC" id="fig|198214.7.peg.2667"/>
<dbReference type="HOGENOM" id="CLU_113736_1_1_6"/>
<dbReference type="Proteomes" id="UP000001006">
    <property type="component" value="Chromosome"/>
</dbReference>
<dbReference type="Proteomes" id="UP000002673">
    <property type="component" value="Chromosome"/>
</dbReference>
<dbReference type="GO" id="GO:0005886">
    <property type="term" value="C:plasma membrane"/>
    <property type="evidence" value="ECO:0007669"/>
    <property type="project" value="UniProtKB-SubCell"/>
</dbReference>
<dbReference type="HAMAP" id="MF_01144">
    <property type="entry name" value="UPF0299"/>
    <property type="match status" value="1"/>
</dbReference>
<dbReference type="InterPro" id="IPR005538">
    <property type="entry name" value="LrgA/CidA"/>
</dbReference>
<dbReference type="InterPro" id="IPR022957">
    <property type="entry name" value="Uncharacterised_UPF0299"/>
</dbReference>
<dbReference type="NCBIfam" id="NF002494">
    <property type="entry name" value="PRK01821.1"/>
    <property type="match status" value="1"/>
</dbReference>
<dbReference type="PANTHER" id="PTHR33931">
    <property type="entry name" value="HOLIN-LIKE PROTEIN CIDA-RELATED"/>
    <property type="match status" value="1"/>
</dbReference>
<dbReference type="PANTHER" id="PTHR33931:SF5">
    <property type="entry name" value="UPF0299 MEMBRANE PROTEIN YOHJ"/>
    <property type="match status" value="1"/>
</dbReference>
<dbReference type="Pfam" id="PF03788">
    <property type="entry name" value="LrgA"/>
    <property type="match status" value="1"/>
</dbReference>
<organism>
    <name type="scientific">Shigella flexneri</name>
    <dbReference type="NCBI Taxonomy" id="623"/>
    <lineage>
        <taxon>Bacteria</taxon>
        <taxon>Pseudomonadati</taxon>
        <taxon>Pseudomonadota</taxon>
        <taxon>Gammaproteobacteria</taxon>
        <taxon>Enterobacterales</taxon>
        <taxon>Enterobacteriaceae</taxon>
        <taxon>Shigella</taxon>
    </lineage>
</organism>